<feature type="chain" id="PRO_0000451368" description="Cytochrome P450 monooxygenase 231">
    <location>
        <begin position="1"/>
        <end position="567"/>
    </location>
</feature>
<feature type="transmembrane region" description="Helical" evidence="2">
    <location>
        <begin position="3"/>
        <end position="23"/>
    </location>
</feature>
<feature type="binding site" description="axial binding residue" evidence="1">
    <location>
        <position position="475"/>
    </location>
    <ligand>
        <name>heme</name>
        <dbReference type="ChEBI" id="CHEBI:30413"/>
    </ligand>
    <ligandPart>
        <name>Fe</name>
        <dbReference type="ChEBI" id="CHEBI:18248"/>
    </ligandPart>
</feature>
<feature type="glycosylation site" description="N-linked (GlcNAc...) asparagine" evidence="3">
    <location>
        <position position="81"/>
    </location>
</feature>
<feature type="glycosylation site" description="N-linked (GlcNAc...) asparagine" evidence="3">
    <location>
        <position position="223"/>
    </location>
</feature>
<reference key="1">
    <citation type="journal article" date="2012" name="Arch. Microbiol.">
        <title>Molecular identification and functional characterization of cytochrome P450 monooxygenases from the brown-rot basidiomycete Postia placenta.</title>
        <authorList>
            <person name="Ide M."/>
            <person name="Ichinose H."/>
            <person name="Wariishi H."/>
        </authorList>
    </citation>
    <scope>NUCLEOTIDE SEQUENCE [MRNA]</scope>
    <scope>IDENTIFICATION</scope>
    <scope>FUNCTION</scope>
    <scope>CATALYTIC ACTIVITY</scope>
    <source>
        <strain>ATCC 44394 / Madison 698-R</strain>
    </source>
</reference>
<name>CY231_POSPM</name>
<evidence type="ECO:0000250" key="1">
    <source>
        <dbReference type="UniProtKB" id="P04798"/>
    </source>
</evidence>
<evidence type="ECO:0000255" key="2"/>
<evidence type="ECO:0000255" key="3">
    <source>
        <dbReference type="PROSITE-ProRule" id="PRU00498"/>
    </source>
</evidence>
<evidence type="ECO:0000269" key="4">
    <source>
    </source>
</evidence>
<evidence type="ECO:0000303" key="5">
    <source>
    </source>
</evidence>
<evidence type="ECO:0000305" key="6"/>
<evidence type="ECO:0000305" key="7">
    <source>
    </source>
</evidence>
<sequence>MDVSTNELAILAIVLLATGVLFYAKGTRRAPLPPGPRGIPFFGNLFQVDAMRPYPQYLKWAQKYGPVVSIKLGGQHVIVLNSSEAADELLVTRSKQYSSRESPHVAFDLVSDQQQMLFMPYGREWKIVRKNVHGLLGPGSSKQMRKMQDLESRVILHDLLCHGETSISEDFVEGPHGEVPERHWFSIIRRYTTSLMMTLMYGHRIHRIVDNPELHQVYAVVSNFTHVSQPGRYLVDVFPVLRRLPDIMAPWRAEGKKMHEWEMGFWGKLFSDSRTALLDGSGLDGFVQSYLRSRAEAGCEDLPGKGVTEDAAGWMRDKLVTYTASGIIEAGSDTTSTAMFSFVLLMLSNPDALQRAKEEMDAVVGSSRMPGWEDEDRLPWLKACIKETLRRAPPLPLGVPHKTEEDDVYNGRLIPKGSTVIGNIWAIHMDPIRYPNPTSFKPERFYHPDEKLDWASGPDTHDRDHYIFGWGRRFCSGKHIAEASLFIVLSRLIWGFDLYTGSDAKTGQARLPDVNDEATFTDGLVAAPKIYPVGFKPRSEKHAEMIKASYRDVQNDWQSMGLAGDER</sequence>
<keyword id="KW-0325">Glycoprotein</keyword>
<keyword id="KW-0349">Heme</keyword>
<keyword id="KW-0408">Iron</keyword>
<keyword id="KW-0472">Membrane</keyword>
<keyword id="KW-0479">Metal-binding</keyword>
<keyword id="KW-0503">Monooxygenase</keyword>
<keyword id="KW-0560">Oxidoreductase</keyword>
<keyword id="KW-0812">Transmembrane</keyword>
<keyword id="KW-1133">Transmembrane helix</keyword>
<comment type="function">
    <text evidence="4 7">Cytochrome P450 monooxygenase that is able to use anthracene, carbazole, pyrene, and phenanthrene as substrates for oxidation (PubMed:21938516). These multifunctional properties against a series of polycyclic aromatic hydrocarbons (PAHs) suggest that CYP231 would play important roles, at least in part, in fungal metabolic systems involved in xenobiotic detoxification (Probable).</text>
</comment>
<comment type="cofactor">
    <cofactor evidence="1">
        <name>heme</name>
        <dbReference type="ChEBI" id="CHEBI:30413"/>
    </cofactor>
</comment>
<comment type="pathway">
    <text evidence="6">Secondary metabolite biosynthesis.</text>
</comment>
<comment type="subcellular location">
    <subcellularLocation>
        <location evidence="2">Membrane</location>
        <topology evidence="2">Single-pass membrane protein</topology>
    </subcellularLocation>
</comment>
<comment type="similarity">
    <text evidence="6">Belongs to the cytochrome P450 family.</text>
</comment>
<dbReference type="EC" id="1.-.-.-" evidence="7"/>
<dbReference type="EMBL" id="AB573400">
    <property type="protein sequence ID" value="BAK09533.1"/>
    <property type="molecule type" value="mRNA"/>
</dbReference>
<dbReference type="SMR" id="F1SYI9"/>
<dbReference type="GlyCosmos" id="F1SYI9">
    <property type="glycosylation" value="2 sites, No reported glycans"/>
</dbReference>
<dbReference type="GO" id="GO:0016020">
    <property type="term" value="C:membrane"/>
    <property type="evidence" value="ECO:0007669"/>
    <property type="project" value="UniProtKB-SubCell"/>
</dbReference>
<dbReference type="GO" id="GO:0020037">
    <property type="term" value="F:heme binding"/>
    <property type="evidence" value="ECO:0007669"/>
    <property type="project" value="InterPro"/>
</dbReference>
<dbReference type="GO" id="GO:0005506">
    <property type="term" value="F:iron ion binding"/>
    <property type="evidence" value="ECO:0007669"/>
    <property type="project" value="InterPro"/>
</dbReference>
<dbReference type="GO" id="GO:0004497">
    <property type="term" value="F:monooxygenase activity"/>
    <property type="evidence" value="ECO:0007669"/>
    <property type="project" value="UniProtKB-KW"/>
</dbReference>
<dbReference type="GO" id="GO:0016705">
    <property type="term" value="F:oxidoreductase activity, acting on paired donors, with incorporation or reduction of molecular oxygen"/>
    <property type="evidence" value="ECO:0007669"/>
    <property type="project" value="InterPro"/>
</dbReference>
<dbReference type="CDD" id="cd11065">
    <property type="entry name" value="CYP64-like"/>
    <property type="match status" value="1"/>
</dbReference>
<dbReference type="Gene3D" id="1.10.630.10">
    <property type="entry name" value="Cytochrome P450"/>
    <property type="match status" value="1"/>
</dbReference>
<dbReference type="InterPro" id="IPR001128">
    <property type="entry name" value="Cyt_P450"/>
</dbReference>
<dbReference type="InterPro" id="IPR002401">
    <property type="entry name" value="Cyt_P450_E_grp-I"/>
</dbReference>
<dbReference type="InterPro" id="IPR036396">
    <property type="entry name" value="Cyt_P450_sf"/>
</dbReference>
<dbReference type="InterPro" id="IPR050364">
    <property type="entry name" value="Cytochrome_P450_fung"/>
</dbReference>
<dbReference type="PANTHER" id="PTHR46300:SF2">
    <property type="entry name" value="CYTOCHROME P450 MONOOXYGENASE ALNH-RELATED"/>
    <property type="match status" value="1"/>
</dbReference>
<dbReference type="PANTHER" id="PTHR46300">
    <property type="entry name" value="P450, PUTATIVE (EUROFUNG)-RELATED-RELATED"/>
    <property type="match status" value="1"/>
</dbReference>
<dbReference type="Pfam" id="PF00067">
    <property type="entry name" value="p450"/>
    <property type="match status" value="1"/>
</dbReference>
<dbReference type="PRINTS" id="PR00463">
    <property type="entry name" value="EP450I"/>
</dbReference>
<dbReference type="PRINTS" id="PR00385">
    <property type="entry name" value="P450"/>
</dbReference>
<dbReference type="SUPFAM" id="SSF48264">
    <property type="entry name" value="Cytochrome P450"/>
    <property type="match status" value="1"/>
</dbReference>
<accession>F1SYI9</accession>
<gene>
    <name evidence="5" type="primary">CYP231</name>
    <name evidence="5" type="synonym">CYP5027B1</name>
</gene>
<protein>
    <recommendedName>
        <fullName evidence="5">Cytochrome P450 monooxygenase 231</fullName>
        <ecNumber evidence="7">1.-.-.-</ecNumber>
    </recommendedName>
</protein>
<organism>
    <name type="scientific">Postia placenta (strain ATCC 44394 / Madison 698-R)</name>
    <name type="common">Brown rot fungus</name>
    <name type="synonym">Poria monticola</name>
    <dbReference type="NCBI Taxonomy" id="561896"/>
    <lineage>
        <taxon>Eukaryota</taxon>
        <taxon>Fungi</taxon>
        <taxon>Dikarya</taxon>
        <taxon>Basidiomycota</taxon>
        <taxon>Agaricomycotina</taxon>
        <taxon>Agaricomycetes</taxon>
        <taxon>Polyporales</taxon>
        <taxon>Adustoporiaceae</taxon>
        <taxon>Rhodonia</taxon>
    </lineage>
</organism>
<proteinExistence type="evidence at protein level"/>